<accession>Q5XBG3</accession>
<feature type="chain" id="PRO_0000165453" description="S-adenosylmethionine:tRNA ribosyltransferase-isomerase">
    <location>
        <begin position="1"/>
        <end position="342"/>
    </location>
</feature>
<evidence type="ECO:0000255" key="1">
    <source>
        <dbReference type="HAMAP-Rule" id="MF_00113"/>
    </source>
</evidence>
<reference key="1">
    <citation type="journal article" date="2004" name="J. Infect. Dis.">
        <title>Progress toward characterization of the group A Streptococcus metagenome: complete genome sequence of a macrolide-resistant serotype M6 strain.</title>
        <authorList>
            <person name="Banks D.J."/>
            <person name="Porcella S.F."/>
            <person name="Barbian K.D."/>
            <person name="Beres S.B."/>
            <person name="Philips L.E."/>
            <person name="Voyich J.M."/>
            <person name="DeLeo F.R."/>
            <person name="Martin J.M."/>
            <person name="Somerville G.A."/>
            <person name="Musser J.M."/>
        </authorList>
    </citation>
    <scope>NUCLEOTIDE SEQUENCE [LARGE SCALE GENOMIC DNA]</scope>
    <source>
        <strain>ATCC BAA-946 / MGAS10394</strain>
    </source>
</reference>
<comment type="function">
    <text evidence="1">Transfers and isomerizes the ribose moiety from AdoMet to the 7-aminomethyl group of 7-deazaguanine (preQ1-tRNA) to give epoxyqueuosine (oQ-tRNA).</text>
</comment>
<comment type="catalytic activity">
    <reaction evidence="1">
        <text>7-aminomethyl-7-carbaguanosine(34) in tRNA + S-adenosyl-L-methionine = epoxyqueuosine(34) in tRNA + adenine + L-methionine + 2 H(+)</text>
        <dbReference type="Rhea" id="RHEA:32155"/>
        <dbReference type="Rhea" id="RHEA-COMP:10342"/>
        <dbReference type="Rhea" id="RHEA-COMP:18582"/>
        <dbReference type="ChEBI" id="CHEBI:15378"/>
        <dbReference type="ChEBI" id="CHEBI:16708"/>
        <dbReference type="ChEBI" id="CHEBI:57844"/>
        <dbReference type="ChEBI" id="CHEBI:59789"/>
        <dbReference type="ChEBI" id="CHEBI:82833"/>
        <dbReference type="ChEBI" id="CHEBI:194443"/>
        <dbReference type="EC" id="2.4.99.17"/>
    </reaction>
</comment>
<comment type="pathway">
    <text evidence="1">tRNA modification; tRNA-queuosine biosynthesis.</text>
</comment>
<comment type="subunit">
    <text evidence="1">Monomer.</text>
</comment>
<comment type="subcellular location">
    <subcellularLocation>
        <location evidence="1">Cytoplasm</location>
    </subcellularLocation>
</comment>
<comment type="similarity">
    <text evidence="1">Belongs to the QueA family.</text>
</comment>
<dbReference type="EC" id="2.4.99.17" evidence="1"/>
<dbReference type="EMBL" id="CP000003">
    <property type="protein sequence ID" value="AAT87250.1"/>
    <property type="molecule type" value="Genomic_DNA"/>
</dbReference>
<dbReference type="RefSeq" id="WP_011184664.1">
    <property type="nucleotide sequence ID" value="NC_006086.1"/>
</dbReference>
<dbReference type="SMR" id="Q5XBG3"/>
<dbReference type="KEGG" id="spa:M6_Spy1115"/>
<dbReference type="HOGENOM" id="CLU_039110_1_0_9"/>
<dbReference type="UniPathway" id="UPA00392"/>
<dbReference type="Proteomes" id="UP000001167">
    <property type="component" value="Chromosome"/>
</dbReference>
<dbReference type="GO" id="GO:0005737">
    <property type="term" value="C:cytoplasm"/>
    <property type="evidence" value="ECO:0007669"/>
    <property type="project" value="UniProtKB-SubCell"/>
</dbReference>
<dbReference type="GO" id="GO:0051075">
    <property type="term" value="F:S-adenosylmethionine:tRNA ribosyltransferase-isomerase activity"/>
    <property type="evidence" value="ECO:0007669"/>
    <property type="project" value="UniProtKB-EC"/>
</dbReference>
<dbReference type="GO" id="GO:0008616">
    <property type="term" value="P:queuosine biosynthetic process"/>
    <property type="evidence" value="ECO:0007669"/>
    <property type="project" value="UniProtKB-UniRule"/>
</dbReference>
<dbReference type="GO" id="GO:0002099">
    <property type="term" value="P:tRNA wobble guanine modification"/>
    <property type="evidence" value="ECO:0007669"/>
    <property type="project" value="TreeGrafter"/>
</dbReference>
<dbReference type="FunFam" id="2.40.10.240:FF:000002">
    <property type="entry name" value="S-adenosylmethionine:tRNA ribosyltransferase-isomerase"/>
    <property type="match status" value="1"/>
</dbReference>
<dbReference type="FunFam" id="3.40.1780.10:FF:000001">
    <property type="entry name" value="S-adenosylmethionine:tRNA ribosyltransferase-isomerase"/>
    <property type="match status" value="1"/>
</dbReference>
<dbReference type="Gene3D" id="2.40.10.240">
    <property type="entry name" value="QueA-like"/>
    <property type="match status" value="1"/>
</dbReference>
<dbReference type="Gene3D" id="3.40.1780.10">
    <property type="entry name" value="QueA-like"/>
    <property type="match status" value="1"/>
</dbReference>
<dbReference type="HAMAP" id="MF_00113">
    <property type="entry name" value="QueA"/>
    <property type="match status" value="1"/>
</dbReference>
<dbReference type="InterPro" id="IPR003699">
    <property type="entry name" value="QueA"/>
</dbReference>
<dbReference type="InterPro" id="IPR042118">
    <property type="entry name" value="QueA_dom1"/>
</dbReference>
<dbReference type="InterPro" id="IPR042119">
    <property type="entry name" value="QueA_dom2"/>
</dbReference>
<dbReference type="InterPro" id="IPR036100">
    <property type="entry name" value="QueA_sf"/>
</dbReference>
<dbReference type="NCBIfam" id="NF001140">
    <property type="entry name" value="PRK00147.1"/>
    <property type="match status" value="1"/>
</dbReference>
<dbReference type="NCBIfam" id="TIGR00113">
    <property type="entry name" value="queA"/>
    <property type="match status" value="1"/>
</dbReference>
<dbReference type="PANTHER" id="PTHR30307">
    <property type="entry name" value="S-ADENOSYLMETHIONINE:TRNA RIBOSYLTRANSFERASE-ISOMERASE"/>
    <property type="match status" value="1"/>
</dbReference>
<dbReference type="PANTHER" id="PTHR30307:SF0">
    <property type="entry name" value="S-ADENOSYLMETHIONINE:TRNA RIBOSYLTRANSFERASE-ISOMERASE"/>
    <property type="match status" value="1"/>
</dbReference>
<dbReference type="Pfam" id="PF02547">
    <property type="entry name" value="Queuosine_synth"/>
    <property type="match status" value="1"/>
</dbReference>
<dbReference type="SUPFAM" id="SSF111337">
    <property type="entry name" value="QueA-like"/>
    <property type="match status" value="1"/>
</dbReference>
<name>QUEA_STRP6</name>
<sequence>MNTNDFDFELPEELIAQTPLEKRDSSKLLIIDHRQKTMVDSHFDHIIDQLNPGDALVMNNTRVLPARLYGEKPDTHGHVELLLLKNTQGDQWEVLAKPAKRLKVGSQVNFGDGRLKATIIDELEHGGRIVEFSYDGIFLEVLESLGEMPLPPYIHEKLEDAERYQTVYAKENGSAAAPTAGLHFTTDLLKKIEAKGVHLVYLTLHVGLGTFRPVSVDNLDEHDMHSEFYSLSEEAAQTLRDVKQAGGRVVAVGTTSIRTLETIGSKFQGDIQADSGWTNIFIKPGYQFKVVDAFSTNFHLPKSTLVMLVSAFAGRDFVLEAYRHAIDEKYRFFSFGDAMFVN</sequence>
<keyword id="KW-0963">Cytoplasm</keyword>
<keyword id="KW-0671">Queuosine biosynthesis</keyword>
<keyword id="KW-0949">S-adenosyl-L-methionine</keyword>
<keyword id="KW-0808">Transferase</keyword>
<proteinExistence type="inferred from homology"/>
<protein>
    <recommendedName>
        <fullName evidence="1">S-adenosylmethionine:tRNA ribosyltransferase-isomerase</fullName>
        <ecNumber evidence="1">2.4.99.17</ecNumber>
    </recommendedName>
    <alternativeName>
        <fullName evidence="1">Queuosine biosynthesis protein QueA</fullName>
    </alternativeName>
</protein>
<organism>
    <name type="scientific">Streptococcus pyogenes serotype M6 (strain ATCC BAA-946 / MGAS10394)</name>
    <dbReference type="NCBI Taxonomy" id="286636"/>
    <lineage>
        <taxon>Bacteria</taxon>
        <taxon>Bacillati</taxon>
        <taxon>Bacillota</taxon>
        <taxon>Bacilli</taxon>
        <taxon>Lactobacillales</taxon>
        <taxon>Streptococcaceae</taxon>
        <taxon>Streptococcus</taxon>
    </lineage>
</organism>
<gene>
    <name evidence="1" type="primary">queA</name>
    <name type="ordered locus">M6_Spy1115</name>
</gene>